<evidence type="ECO:0000256" key="1">
    <source>
        <dbReference type="SAM" id="MobiDB-lite"/>
    </source>
</evidence>
<evidence type="ECO:0000269" key="2">
    <source>
    </source>
</evidence>
<evidence type="ECO:0000269" key="3">
    <source>
    </source>
</evidence>
<evidence type="ECO:0000269" key="4">
    <source>
    </source>
</evidence>
<evidence type="ECO:0000269" key="5">
    <source>
    </source>
</evidence>
<evidence type="ECO:0000303" key="6">
    <source>
    </source>
</evidence>
<evidence type="ECO:0000303" key="7">
    <source>
    </source>
</evidence>
<evidence type="ECO:0000303" key="8">
    <source>
    </source>
</evidence>
<evidence type="ECO:0000305" key="9"/>
<evidence type="ECO:0007829" key="10">
    <source>
        <dbReference type="PDB" id="2JOS"/>
    </source>
</evidence>
<comment type="function">
    <text evidence="2 4 5">Antimicrobial peptide with broad-spectrum activity against Gram-positive and Gram-negative bacteria as well as against a variety of fungi. Rapidly inactivates channel catfish herpesvirus (ED(50)=4 uM) and frog virus 3 (ED(50)=13 uM) over a wide temperature range (PubMed:15193922). Seems to disrupt the membranes by adopting an alpha helical conformation and forming toroidal pores. Has hemolytic activity.</text>
</comment>
<comment type="subcellular location">
    <subcellularLocation>
        <location evidence="2">Secreted</location>
    </subcellularLocation>
</comment>
<comment type="tissue specificity">
    <text evidence="2">Expressed in mast cells in gill, skin and gut, and in lining blood vessels in the viscera. Also in intestine, spleen, anterior kidney, and blood cells.</text>
</comment>
<comment type="mass spectrometry"/>
<comment type="similarity">
    <text evidence="9">Belongs to the pleurocidin family.</text>
</comment>
<accession>Q8UUG0</accession>
<reference key="1">
    <citation type="journal article" date="2002" name="J. Biol. Chem.">
        <title>Discovery and characterization of two isoforms of moronecidin, a novel antimicrobial peptide from hybrid striped bass.</title>
        <authorList>
            <person name="Lauth X."/>
            <person name="Shike H."/>
            <person name="Burns J.C."/>
            <person name="Westerman M.E."/>
            <person name="Ostland V.E."/>
            <person name="Carlberg J.M."/>
            <person name="Van Olst J.C."/>
            <person name="Nizet V."/>
            <person name="Taylor S.W."/>
            <person name="Shimizu C."/>
            <person name="Bulet P."/>
        </authorList>
    </citation>
    <scope>NUCLEOTIDE SEQUENCE [GENOMIC DNA / MRNA]</scope>
    <scope>PROTEIN SEQUENCE OF 23-41</scope>
    <scope>MASS SPECTROMETRY</scope>
    <source>
        <tissue>Gill</tissue>
        <tissue>Skin</tissue>
    </source>
</reference>
<reference key="2">
    <citation type="journal article" date="2001" name="Nature">
        <title>Peptide antibiotics in mast cells of fish.</title>
        <authorList>
            <person name="Silphaduang U."/>
            <person name="Noga E.J."/>
        </authorList>
    </citation>
    <scope>PROTEIN SEQUENCE OF 23-44</scope>
    <scope>FUNCTION</scope>
    <scope>TISSUE SPECIFICITY</scope>
    <scope>SUBCELLULAR LOCATION</scope>
</reference>
<reference key="3">
    <citation type="journal article" date="2001" name="Nature">
        <authorList>
            <person name="Silphaduang U."/>
            <person name="Noga E.J."/>
        </authorList>
    </citation>
    <scope>ERRATUM OF PUBMED:11713517</scope>
</reference>
<reference key="4">
    <citation type="journal article" date="2004" name="Virology">
        <title>Inactivation of viruses infecting ectothermic animals by amphibian and piscine antimicrobial peptides.</title>
        <authorList>
            <person name="Chinchar V.G."/>
            <person name="Bryan L."/>
            <person name="Silphadaung U."/>
            <person name="Noga E."/>
            <person name="Wade D."/>
            <person name="Rollins-Smith L."/>
        </authorList>
    </citation>
    <scope>FUNCTION AS ANTIVIRAL PEPTIDE</scope>
</reference>
<reference key="5">
    <citation type="journal article" date="2007" name="Biochemistry">
        <title>Structure and mechanism of action of the antimicrobial peptide piscidin.</title>
        <authorList>
            <person name="Campagna S."/>
            <person name="Saint N."/>
            <person name="Molle G."/>
            <person name="Aumelas A."/>
        </authorList>
    </citation>
    <scope>STRUCTURE BY NMR OF 23-44</scope>
    <scope>AMIDATION AT GLY-44</scope>
    <scope>FUNCTION</scope>
</reference>
<protein>
    <recommendedName>
        <fullName evidence="7">Moronecidin</fullName>
    </recommendedName>
    <alternativeName>
        <fullName evidence="6 8">Piscidin-1</fullName>
    </alternativeName>
</protein>
<keyword id="KW-0002">3D-structure</keyword>
<keyword id="KW-0027">Amidation</keyword>
<keyword id="KW-0044">Antibiotic</keyword>
<keyword id="KW-0929">Antimicrobial</keyword>
<keyword id="KW-0204">Cytolysis</keyword>
<keyword id="KW-0903">Direct protein sequencing</keyword>
<keyword id="KW-0295">Fungicide</keyword>
<keyword id="KW-0354">Hemolysis</keyword>
<keyword id="KW-0964">Secreted</keyword>
<keyword id="KW-0732">Signal</keyword>
<dbReference type="EMBL" id="AF385583">
    <property type="protein sequence ID" value="AAL49496.1"/>
    <property type="molecule type" value="mRNA"/>
</dbReference>
<dbReference type="EMBL" id="AF394244">
    <property type="protein sequence ID" value="AAL57319.1"/>
    <property type="molecule type" value="Genomic_DNA"/>
</dbReference>
<dbReference type="PDB" id="2JOS">
    <property type="method" value="NMR"/>
    <property type="chains" value="A=23-44"/>
</dbReference>
<dbReference type="PDB" id="2MCU">
    <property type="method" value="NMR"/>
    <property type="chains" value="A=23-44"/>
</dbReference>
<dbReference type="PDB" id="2MCV">
    <property type="method" value="NMR"/>
    <property type="chains" value="A=23-44"/>
</dbReference>
<dbReference type="PDB" id="2OJM">
    <property type="method" value="NMR"/>
    <property type="chains" value="A=23-44"/>
</dbReference>
<dbReference type="PDB" id="6PF0">
    <property type="method" value="NMR"/>
    <property type="chains" value="A=23-44"/>
</dbReference>
<dbReference type="PDBsum" id="2JOS"/>
<dbReference type="PDBsum" id="2MCU"/>
<dbReference type="PDBsum" id="2MCV"/>
<dbReference type="PDBsum" id="2OJM"/>
<dbReference type="PDBsum" id="6PF0"/>
<dbReference type="BMRB" id="Q8UUG0"/>
<dbReference type="SMR" id="Q8UUG0"/>
<dbReference type="EvolutionaryTrace" id="Q8UUG0"/>
<dbReference type="GO" id="GO:0005576">
    <property type="term" value="C:extracellular region"/>
    <property type="evidence" value="ECO:0007669"/>
    <property type="project" value="UniProtKB-SubCell"/>
</dbReference>
<dbReference type="GO" id="GO:0042742">
    <property type="term" value="P:defense response to bacterium"/>
    <property type="evidence" value="ECO:0007669"/>
    <property type="project" value="UniProtKB-KW"/>
</dbReference>
<dbReference type="GO" id="GO:0050832">
    <property type="term" value="P:defense response to fungus"/>
    <property type="evidence" value="ECO:0007669"/>
    <property type="project" value="UniProtKB-KW"/>
</dbReference>
<dbReference type="GO" id="GO:0031640">
    <property type="term" value="P:killing of cells of another organism"/>
    <property type="evidence" value="ECO:0007669"/>
    <property type="project" value="UniProtKB-KW"/>
</dbReference>
<dbReference type="InterPro" id="IPR012515">
    <property type="entry name" value="Antimicrobial12"/>
</dbReference>
<dbReference type="Pfam" id="PF08107">
    <property type="entry name" value="Antimicrobial12"/>
    <property type="match status" value="1"/>
</dbReference>
<feature type="signal peptide" evidence="2 3">
    <location>
        <begin position="1"/>
        <end position="22"/>
    </location>
</feature>
<feature type="peptide" id="PRO_0000000285" description="Moronecidin" evidence="2">
    <location>
        <begin position="23"/>
        <end position="44"/>
    </location>
</feature>
<feature type="propeptide" id="PRO_0000000286" evidence="2">
    <location>
        <begin position="47"/>
        <end position="79"/>
    </location>
</feature>
<feature type="region of interest" description="Disordered" evidence="1">
    <location>
        <begin position="45"/>
        <end position="79"/>
    </location>
</feature>
<feature type="compositionally biased region" description="Low complexity" evidence="1">
    <location>
        <begin position="52"/>
        <end position="69"/>
    </location>
</feature>
<feature type="modified residue" description="Glycine amide" evidence="5">
    <location>
        <position position="44"/>
    </location>
</feature>
<feature type="strand" evidence="10">
    <location>
        <begin position="25"/>
        <end position="30"/>
    </location>
</feature>
<feature type="helix" evidence="10">
    <location>
        <begin position="31"/>
        <end position="41"/>
    </location>
</feature>
<organism>
    <name type="scientific">Morone saxatilis</name>
    <name type="common">Striped bass</name>
    <name type="synonym">Perca saxatilis</name>
    <dbReference type="NCBI Taxonomy" id="34816"/>
    <lineage>
        <taxon>Eukaryota</taxon>
        <taxon>Metazoa</taxon>
        <taxon>Chordata</taxon>
        <taxon>Craniata</taxon>
        <taxon>Vertebrata</taxon>
        <taxon>Euteleostomi</taxon>
        <taxon>Actinopterygii</taxon>
        <taxon>Neopterygii</taxon>
        <taxon>Teleostei</taxon>
        <taxon>Neoteleostei</taxon>
        <taxon>Acanthomorphata</taxon>
        <taxon>Eupercaria</taxon>
        <taxon>Moronidae</taxon>
        <taxon>Morone</taxon>
    </lineage>
</organism>
<proteinExistence type="evidence at protein level"/>
<name>MORO_MORSA</name>
<sequence>MKCATLFLVLSMVVLMAEPGDAFFHHIFRGIVHVGKTIHRLVTGGKAEQDQQDQQYQQEQQEQQAQQYQRFNRERAAFD</sequence>